<protein>
    <recommendedName>
        <fullName evidence="1">Thiamine-monophosphate kinase</fullName>
        <shortName evidence="1">TMP kinase</shortName>
        <shortName evidence="1">Thiamine-phosphate kinase</shortName>
        <ecNumber evidence="1">2.7.4.16</ecNumber>
    </recommendedName>
</protein>
<gene>
    <name evidence="1" type="primary">thiL</name>
    <name type="ordered locus">PH1833</name>
</gene>
<proteinExistence type="inferred from homology"/>
<accession>O59497</accession>
<name>THIL_PYRHO</name>
<organism>
    <name type="scientific">Pyrococcus horikoshii (strain ATCC 700860 / DSM 12428 / JCM 9974 / NBRC 100139 / OT-3)</name>
    <dbReference type="NCBI Taxonomy" id="70601"/>
    <lineage>
        <taxon>Archaea</taxon>
        <taxon>Methanobacteriati</taxon>
        <taxon>Methanobacteriota</taxon>
        <taxon>Thermococci</taxon>
        <taxon>Thermococcales</taxon>
        <taxon>Thermococcaceae</taxon>
        <taxon>Pyrococcus</taxon>
    </lineage>
</organism>
<reference key="1">
    <citation type="journal article" date="1998" name="DNA Res.">
        <title>Complete sequence and gene organization of the genome of a hyper-thermophilic archaebacterium, Pyrococcus horikoshii OT3.</title>
        <authorList>
            <person name="Kawarabayasi Y."/>
            <person name="Sawada M."/>
            <person name="Horikawa H."/>
            <person name="Haikawa Y."/>
            <person name="Hino Y."/>
            <person name="Yamamoto S."/>
            <person name="Sekine M."/>
            <person name="Baba S."/>
            <person name="Kosugi H."/>
            <person name="Hosoyama A."/>
            <person name="Nagai Y."/>
            <person name="Sakai M."/>
            <person name="Ogura K."/>
            <person name="Otsuka R."/>
            <person name="Nakazawa H."/>
            <person name="Takamiya M."/>
            <person name="Ohfuku Y."/>
            <person name="Funahashi T."/>
            <person name="Tanaka T."/>
            <person name="Kudoh Y."/>
            <person name="Yamazaki J."/>
            <person name="Kushida N."/>
            <person name="Oguchi A."/>
            <person name="Aoki K."/>
            <person name="Yoshizawa T."/>
            <person name="Nakamura Y."/>
            <person name="Robb F.T."/>
            <person name="Horikoshi K."/>
            <person name="Masuchi Y."/>
            <person name="Shizuya H."/>
            <person name="Kikuchi H."/>
        </authorList>
    </citation>
    <scope>NUCLEOTIDE SEQUENCE [LARGE SCALE GENOMIC DNA]</scope>
    <source>
        <strain>ATCC 700860 / DSM 12428 / JCM 9974 / NBRC 100139 / OT-3</strain>
    </source>
</reference>
<sequence length="309" mass="34348">MTKMRESEIIRMFIEEFDNHALGDDAGFVRFNDSWLLVTSDMLVWRTDVPDFMTPEEAGKKVVTMNVSDIAAMGGLPLAFFFSLGVPENTDEKTLRGIAKGINKGAKEYGVKIVSGDTNEAREIIIDGGAIGRGSRLLLRSNAKPGDLVCVTGELGRPLTALLLWLKGEEIPPKILEKAKNPKAREREGIELSNYANSAIDISDGLSKELWEIARSSNVRIVIDEDKIPVNEEVREIVKDPIKIALASGEEFELVFTIPKENLGNISFDFTIIGRVEEGEGVYIKREDKMERLPILGWEHLKGGDYVNL</sequence>
<keyword id="KW-0067">ATP-binding</keyword>
<keyword id="KW-0418">Kinase</keyword>
<keyword id="KW-0460">Magnesium</keyword>
<keyword id="KW-0479">Metal-binding</keyword>
<keyword id="KW-0547">Nucleotide-binding</keyword>
<keyword id="KW-0784">Thiamine biosynthesis</keyword>
<keyword id="KW-0808">Transferase</keyword>
<feature type="chain" id="PRO_0000096204" description="Thiamine-monophosphate kinase">
    <location>
        <begin position="1"/>
        <end position="309"/>
    </location>
</feature>
<feature type="binding site" evidence="1">
    <location>
        <position position="25"/>
    </location>
    <ligand>
        <name>Mg(2+)</name>
        <dbReference type="ChEBI" id="CHEBI:18420"/>
        <label>3</label>
    </ligand>
</feature>
<feature type="binding site" evidence="1">
    <location>
        <position position="25"/>
    </location>
    <ligand>
        <name>Mg(2+)</name>
        <dbReference type="ChEBI" id="CHEBI:18420"/>
        <label>4</label>
    </ligand>
</feature>
<feature type="binding site" evidence="1">
    <location>
        <position position="39"/>
    </location>
    <ligand>
        <name>Mg(2+)</name>
        <dbReference type="ChEBI" id="CHEBI:18420"/>
        <label>4</label>
    </ligand>
</feature>
<feature type="binding site" evidence="1">
    <location>
        <position position="40"/>
    </location>
    <ligand>
        <name>Mg(2+)</name>
        <dbReference type="ChEBI" id="CHEBI:18420"/>
        <label>1</label>
    </ligand>
</feature>
<feature type="binding site" evidence="1">
    <location>
        <position position="41"/>
    </location>
    <ligand>
        <name>Mg(2+)</name>
        <dbReference type="ChEBI" id="CHEBI:18420"/>
        <label>1</label>
    </ligand>
</feature>
<feature type="binding site" evidence="1">
    <location>
        <position position="41"/>
    </location>
    <ligand>
        <name>Mg(2+)</name>
        <dbReference type="ChEBI" id="CHEBI:18420"/>
        <label>2</label>
    </ligand>
</feature>
<feature type="binding site" evidence="1">
    <location>
        <position position="48"/>
    </location>
    <ligand>
        <name>substrate</name>
    </ligand>
</feature>
<feature type="binding site" evidence="1">
    <location>
        <position position="69"/>
    </location>
    <ligand>
        <name>Mg(2+)</name>
        <dbReference type="ChEBI" id="CHEBI:18420"/>
        <label>2</label>
    </ligand>
</feature>
<feature type="binding site" evidence="1">
    <location>
        <position position="69"/>
    </location>
    <ligand>
        <name>Mg(2+)</name>
        <dbReference type="ChEBI" id="CHEBI:18420"/>
        <label>3</label>
    </ligand>
</feature>
<feature type="binding site" evidence="1">
    <location>
        <position position="69"/>
    </location>
    <ligand>
        <name>Mg(2+)</name>
        <dbReference type="ChEBI" id="CHEBI:18420"/>
        <label>4</label>
    </ligand>
</feature>
<feature type="binding site" evidence="1">
    <location>
        <begin position="116"/>
        <end position="117"/>
    </location>
    <ligand>
        <name>ATP</name>
        <dbReference type="ChEBI" id="CHEBI:30616"/>
    </ligand>
</feature>
<feature type="binding site" evidence="1">
    <location>
        <position position="117"/>
    </location>
    <ligand>
        <name>Mg(2+)</name>
        <dbReference type="ChEBI" id="CHEBI:18420"/>
        <label>1</label>
    </ligand>
</feature>
<feature type="binding site" evidence="1">
    <location>
        <position position="140"/>
    </location>
    <ligand>
        <name>ATP</name>
        <dbReference type="ChEBI" id="CHEBI:30616"/>
    </ligand>
</feature>
<feature type="binding site" evidence="1">
    <location>
        <position position="201"/>
    </location>
    <ligand>
        <name>Mg(2+)</name>
        <dbReference type="ChEBI" id="CHEBI:18420"/>
        <label>3</label>
    </ligand>
</feature>
<feature type="binding site" evidence="1">
    <location>
        <position position="203"/>
    </location>
    <ligand>
        <name>ATP</name>
        <dbReference type="ChEBI" id="CHEBI:30616"/>
    </ligand>
</feature>
<feature type="binding site" evidence="1">
    <location>
        <position position="204"/>
    </location>
    <ligand>
        <name>Mg(2+)</name>
        <dbReference type="ChEBI" id="CHEBI:18420"/>
        <label>5</label>
    </ligand>
</feature>
<feature type="binding site" evidence="1">
    <location>
        <position position="250"/>
    </location>
    <ligand>
        <name>substrate</name>
    </ligand>
</feature>
<feature type="binding site" evidence="1">
    <location>
        <position position="298"/>
    </location>
    <ligand>
        <name>substrate</name>
    </ligand>
</feature>
<evidence type="ECO:0000255" key="1">
    <source>
        <dbReference type="HAMAP-Rule" id="MF_02128"/>
    </source>
</evidence>
<dbReference type="EC" id="2.7.4.16" evidence="1"/>
<dbReference type="EMBL" id="BA000001">
    <property type="protein sequence ID" value="BAA30953.1"/>
    <property type="molecule type" value="Genomic_DNA"/>
</dbReference>
<dbReference type="PIR" id="B71195">
    <property type="entry name" value="B71195"/>
</dbReference>
<dbReference type="SMR" id="O59497"/>
<dbReference type="STRING" id="70601.gene:9378836"/>
<dbReference type="EnsemblBacteria" id="BAA30953">
    <property type="protein sequence ID" value="BAA30953"/>
    <property type="gene ID" value="BAA30953"/>
</dbReference>
<dbReference type="KEGG" id="pho:PH1833"/>
<dbReference type="eggNOG" id="arCOG00638">
    <property type="taxonomic scope" value="Archaea"/>
</dbReference>
<dbReference type="UniPathway" id="UPA00060">
    <property type="reaction ID" value="UER00142"/>
</dbReference>
<dbReference type="Proteomes" id="UP000000752">
    <property type="component" value="Chromosome"/>
</dbReference>
<dbReference type="GO" id="GO:0005524">
    <property type="term" value="F:ATP binding"/>
    <property type="evidence" value="ECO:0007669"/>
    <property type="project" value="UniProtKB-UniRule"/>
</dbReference>
<dbReference type="GO" id="GO:0000287">
    <property type="term" value="F:magnesium ion binding"/>
    <property type="evidence" value="ECO:0007669"/>
    <property type="project" value="UniProtKB-UniRule"/>
</dbReference>
<dbReference type="GO" id="GO:0009030">
    <property type="term" value="F:thiamine-phosphate kinase activity"/>
    <property type="evidence" value="ECO:0007669"/>
    <property type="project" value="UniProtKB-UniRule"/>
</dbReference>
<dbReference type="GO" id="GO:0009228">
    <property type="term" value="P:thiamine biosynthetic process"/>
    <property type="evidence" value="ECO:0007669"/>
    <property type="project" value="UniProtKB-KW"/>
</dbReference>
<dbReference type="GO" id="GO:0009229">
    <property type="term" value="P:thiamine diphosphate biosynthetic process"/>
    <property type="evidence" value="ECO:0007669"/>
    <property type="project" value="UniProtKB-UniRule"/>
</dbReference>
<dbReference type="CDD" id="cd02194">
    <property type="entry name" value="ThiL"/>
    <property type="match status" value="1"/>
</dbReference>
<dbReference type="Gene3D" id="3.90.650.10">
    <property type="entry name" value="PurM-like C-terminal domain"/>
    <property type="match status" value="1"/>
</dbReference>
<dbReference type="Gene3D" id="3.30.1330.10">
    <property type="entry name" value="PurM-like, N-terminal domain"/>
    <property type="match status" value="1"/>
</dbReference>
<dbReference type="HAMAP" id="MF_02128">
    <property type="entry name" value="TMP_kinase"/>
    <property type="match status" value="1"/>
</dbReference>
<dbReference type="InterPro" id="IPR010918">
    <property type="entry name" value="PurM-like_C_dom"/>
</dbReference>
<dbReference type="InterPro" id="IPR036676">
    <property type="entry name" value="PurM-like_C_sf"/>
</dbReference>
<dbReference type="InterPro" id="IPR016188">
    <property type="entry name" value="PurM-like_N"/>
</dbReference>
<dbReference type="InterPro" id="IPR036921">
    <property type="entry name" value="PurM-like_N_sf"/>
</dbReference>
<dbReference type="InterPro" id="IPR006283">
    <property type="entry name" value="ThiL-like"/>
</dbReference>
<dbReference type="NCBIfam" id="NF004353">
    <property type="entry name" value="PRK05731.2-2"/>
    <property type="match status" value="1"/>
</dbReference>
<dbReference type="NCBIfam" id="TIGR01379">
    <property type="entry name" value="thiL"/>
    <property type="match status" value="1"/>
</dbReference>
<dbReference type="PANTHER" id="PTHR30270">
    <property type="entry name" value="THIAMINE-MONOPHOSPHATE KINASE"/>
    <property type="match status" value="1"/>
</dbReference>
<dbReference type="PANTHER" id="PTHR30270:SF3">
    <property type="entry name" value="THIAMINE-MONOPHOSPHATE KINASE"/>
    <property type="match status" value="1"/>
</dbReference>
<dbReference type="Pfam" id="PF00586">
    <property type="entry name" value="AIRS"/>
    <property type="match status" value="1"/>
</dbReference>
<dbReference type="Pfam" id="PF02769">
    <property type="entry name" value="AIRS_C"/>
    <property type="match status" value="1"/>
</dbReference>
<dbReference type="PIRSF" id="PIRSF005303">
    <property type="entry name" value="Thiam_monoph_kin"/>
    <property type="match status" value="1"/>
</dbReference>
<dbReference type="SUPFAM" id="SSF56042">
    <property type="entry name" value="PurM C-terminal domain-like"/>
    <property type="match status" value="1"/>
</dbReference>
<dbReference type="SUPFAM" id="SSF55326">
    <property type="entry name" value="PurM N-terminal domain-like"/>
    <property type="match status" value="1"/>
</dbReference>
<comment type="function">
    <text evidence="1">Catalyzes the ATP-dependent phosphorylation of thiamine-monophosphate (TMP) to form thiamine-pyrophosphate (TPP), the active form of vitamin B1.</text>
</comment>
<comment type="catalytic activity">
    <reaction evidence="1">
        <text>thiamine phosphate + ATP = thiamine diphosphate + ADP</text>
        <dbReference type="Rhea" id="RHEA:15913"/>
        <dbReference type="ChEBI" id="CHEBI:30616"/>
        <dbReference type="ChEBI" id="CHEBI:37575"/>
        <dbReference type="ChEBI" id="CHEBI:58937"/>
        <dbReference type="ChEBI" id="CHEBI:456216"/>
        <dbReference type="EC" id="2.7.4.16"/>
    </reaction>
</comment>
<comment type="pathway">
    <text evidence="1">Cofactor biosynthesis; thiamine diphosphate biosynthesis; thiamine diphosphate from thiamine phosphate: step 1/1.</text>
</comment>
<comment type="miscellaneous">
    <text evidence="1">Reaction mechanism of ThiL seems to utilize a direct, inline transfer of the gamma-phosphate of ATP to TMP rather than a phosphorylated enzyme intermediate.</text>
</comment>
<comment type="similarity">
    <text evidence="1">Belongs to the thiamine-monophosphate kinase family.</text>
</comment>